<reference key="1">
    <citation type="journal article" date="1997" name="Science">
        <title>The complete genome sequence of Escherichia coli K-12.</title>
        <authorList>
            <person name="Blattner F.R."/>
            <person name="Plunkett G. III"/>
            <person name="Bloch C.A."/>
            <person name="Perna N.T."/>
            <person name="Burland V."/>
            <person name="Riley M."/>
            <person name="Collado-Vides J."/>
            <person name="Glasner J.D."/>
            <person name="Rode C.K."/>
            <person name="Mayhew G.F."/>
            <person name="Gregor J."/>
            <person name="Davis N.W."/>
            <person name="Kirkpatrick H.A."/>
            <person name="Goeden M.A."/>
            <person name="Rose D.J."/>
            <person name="Mau B."/>
            <person name="Shao Y."/>
        </authorList>
    </citation>
    <scope>NUCLEOTIDE SEQUENCE [LARGE SCALE GENOMIC DNA]</scope>
    <source>
        <strain>K12 / MG1655 / ATCC 47076</strain>
    </source>
</reference>
<reference key="2">
    <citation type="journal article" date="2019" name="MBio">
        <title>Identifying small proteins by ribosome profiling with stalled initiation complexes.</title>
        <authorList>
            <person name="Weaver J."/>
            <person name="Mohammad F."/>
            <person name="Buskirk A.R."/>
            <person name="Storz G."/>
        </authorList>
    </citation>
    <scope>IDENTIFICATION</scope>
    <scope>INDUCTION</scope>
    <source>
        <strain>K12 / MG1655 / ATCC 47076</strain>
    </source>
</reference>
<name>YNFU_ECOLI</name>
<keyword id="KW-0479">Metal-binding</keyword>
<keyword id="KW-1185">Reference proteome</keyword>
<keyword id="KW-0862">Zinc</keyword>
<feature type="chain" id="PRO_0000447159" description="Putative zinc-binding protein YnfU">
    <location>
        <begin position="1"/>
        <end position="56"/>
    </location>
</feature>
<feature type="binding site" evidence="2">
    <location>
        <position position="19"/>
    </location>
    <ligand>
        <name>Zn(2+)</name>
        <dbReference type="ChEBI" id="CHEBI:29105"/>
    </ligand>
</feature>
<feature type="binding site" evidence="2">
    <location>
        <position position="22"/>
    </location>
    <ligand>
        <name>Zn(2+)</name>
        <dbReference type="ChEBI" id="CHEBI:29105"/>
    </ligand>
</feature>
<feature type="binding site" evidence="2">
    <location>
        <position position="41"/>
    </location>
    <ligand>
        <name>Zn(2+)</name>
        <dbReference type="ChEBI" id="CHEBI:29105"/>
    </ligand>
</feature>
<feature type="binding site" evidence="2">
    <location>
        <position position="44"/>
    </location>
    <ligand>
        <name>Zn(2+)</name>
        <dbReference type="ChEBI" id="CHEBI:29105"/>
    </ligand>
</feature>
<gene>
    <name evidence="2" type="primary">ynfU</name>
    <name evidence="4" type="ordered locus">b4776</name>
</gene>
<accession>P0DSF4</accession>
<accession>A0A7H2C782</accession>
<dbReference type="EMBL" id="U00096">
    <property type="protein sequence ID" value="QNV50529.1"/>
    <property type="molecule type" value="Genomic_DNA"/>
</dbReference>
<dbReference type="SMR" id="P0DSF4"/>
<dbReference type="InParanoid" id="P0DSF4"/>
<dbReference type="BioCyc" id="EcoCyc:MONOMER0-4488"/>
<dbReference type="Proteomes" id="UP000000625">
    <property type="component" value="Chromosome"/>
</dbReference>
<dbReference type="GO" id="GO:0046872">
    <property type="term" value="F:metal ion binding"/>
    <property type="evidence" value="ECO:0007669"/>
    <property type="project" value="UniProtKB-KW"/>
</dbReference>
<dbReference type="NCBIfam" id="NF038384">
    <property type="entry name" value="zinc_YnfU_fam"/>
    <property type="match status" value="1"/>
</dbReference>
<dbReference type="Pfam" id="PF23499">
    <property type="entry name" value="YnfU"/>
    <property type="match status" value="1"/>
</dbReference>
<protein>
    <recommendedName>
        <fullName evidence="2">Putative zinc-binding protein YnfU</fullName>
    </recommendedName>
</protein>
<organism>
    <name type="scientific">Escherichia coli (strain K12)</name>
    <dbReference type="NCBI Taxonomy" id="83333"/>
    <lineage>
        <taxon>Bacteria</taxon>
        <taxon>Pseudomonadati</taxon>
        <taxon>Pseudomonadota</taxon>
        <taxon>Gammaproteobacteria</taxon>
        <taxon>Enterobacterales</taxon>
        <taxon>Enterobacteriaceae</taxon>
        <taxon>Escherichia</taxon>
    </lineage>
</organism>
<proteinExistence type="evidence at protein level"/>
<comment type="cofactor">
    <cofactor evidence="2">
        <name>Zn(2+)</name>
        <dbReference type="ChEBI" id="CHEBI:29105"/>
    </cofactor>
    <text evidence="2">Might bind 1 zinc ion.</text>
</comment>
<comment type="induction">
    <text evidence="1">Expressed equally in exponential and stationary phase in rich medium (at protein level).</text>
</comment>
<comment type="miscellaneous">
    <text evidence="3">Encoded in the Qin prophage.</text>
</comment>
<sequence>MSERKNSKSRRNYLVKCSCPNCTQESEHSFSRVQKGALLICPHCNKVFQTNLKAVA</sequence>
<evidence type="ECO:0000269" key="1">
    <source>
    </source>
</evidence>
<evidence type="ECO:0000303" key="2">
    <source>
    </source>
</evidence>
<evidence type="ECO:0000305" key="3"/>
<evidence type="ECO:0000312" key="4">
    <source>
        <dbReference type="EMBL" id="QNV50529.1"/>
    </source>
</evidence>